<evidence type="ECO:0000250" key="1"/>
<evidence type="ECO:0000255" key="2"/>
<evidence type="ECO:0000305" key="3"/>
<proteinExistence type="inferred from homology"/>
<protein>
    <recommendedName>
        <fullName>Ferrous iron permease EfeU</fullName>
    </recommendedName>
    <alternativeName>
        <fullName>Fe(2+) ion permease EfeU</fullName>
    </alternativeName>
    <alternativeName>
        <fullName>Ferrous iron uptake protein</fullName>
    </alternativeName>
</protein>
<name>EFEU_SHIFL</name>
<keyword id="KW-0997">Cell inner membrane</keyword>
<keyword id="KW-1003">Cell membrane</keyword>
<keyword id="KW-0406">Ion transport</keyword>
<keyword id="KW-0408">Iron</keyword>
<keyword id="KW-0410">Iron transport</keyword>
<keyword id="KW-0472">Membrane</keyword>
<keyword id="KW-1185">Reference proteome</keyword>
<keyword id="KW-0812">Transmembrane</keyword>
<keyword id="KW-1133">Transmembrane helix</keyword>
<keyword id="KW-0813">Transport</keyword>
<gene>
    <name type="primary">efeU</name>
    <name type="ordered locus">SF1019</name>
    <name type="ordered locus">S1089</name>
</gene>
<dbReference type="EMBL" id="AE005674">
    <property type="protein sequence ID" value="AAN42645.1"/>
    <property type="status" value="ALT_INIT"/>
    <property type="molecule type" value="Genomic_DNA"/>
</dbReference>
<dbReference type="EMBL" id="AE014073">
    <property type="protein sequence ID" value="AAP16530.1"/>
    <property type="molecule type" value="Genomic_DNA"/>
</dbReference>
<dbReference type="RefSeq" id="NP_706938.1">
    <property type="nucleotide sequence ID" value="NC_004337.2"/>
</dbReference>
<dbReference type="STRING" id="198214.SF1019"/>
<dbReference type="PaxDb" id="198214-SF1019"/>
<dbReference type="GeneID" id="1023989"/>
<dbReference type="KEGG" id="sfl:SF1019"/>
<dbReference type="KEGG" id="sfx:S1089"/>
<dbReference type="PATRIC" id="fig|198214.7.peg.1183"/>
<dbReference type="HOGENOM" id="CLU_077905_0_0_6"/>
<dbReference type="Proteomes" id="UP000001006">
    <property type="component" value="Chromosome"/>
</dbReference>
<dbReference type="Proteomes" id="UP000002673">
    <property type="component" value="Chromosome"/>
</dbReference>
<dbReference type="GO" id="GO:0033573">
    <property type="term" value="C:high-affinity iron permease complex"/>
    <property type="evidence" value="ECO:0007669"/>
    <property type="project" value="InterPro"/>
</dbReference>
<dbReference type="GO" id="GO:0015093">
    <property type="term" value="F:ferrous iron transmembrane transporter activity"/>
    <property type="evidence" value="ECO:0007669"/>
    <property type="project" value="TreeGrafter"/>
</dbReference>
<dbReference type="InterPro" id="IPR004923">
    <property type="entry name" value="FTR1/Fip1/EfeU"/>
</dbReference>
<dbReference type="NCBIfam" id="NF041756">
    <property type="entry name" value="EfeU"/>
    <property type="match status" value="1"/>
</dbReference>
<dbReference type="PANTHER" id="PTHR31632">
    <property type="entry name" value="IRON TRANSPORTER FTH1"/>
    <property type="match status" value="1"/>
</dbReference>
<dbReference type="PANTHER" id="PTHR31632:SF2">
    <property type="entry name" value="PLASMA MEMBRANE IRON PERMEASE"/>
    <property type="match status" value="1"/>
</dbReference>
<dbReference type="Pfam" id="PF03239">
    <property type="entry name" value="FTR1"/>
    <property type="match status" value="1"/>
</dbReference>
<reference key="1">
    <citation type="journal article" date="2002" name="Nucleic Acids Res.">
        <title>Genome sequence of Shigella flexneri 2a: insights into pathogenicity through comparison with genomes of Escherichia coli K12 and O157.</title>
        <authorList>
            <person name="Jin Q."/>
            <person name="Yuan Z."/>
            <person name="Xu J."/>
            <person name="Wang Y."/>
            <person name="Shen Y."/>
            <person name="Lu W."/>
            <person name="Wang J."/>
            <person name="Liu H."/>
            <person name="Yang J."/>
            <person name="Yang F."/>
            <person name="Zhang X."/>
            <person name="Zhang J."/>
            <person name="Yang G."/>
            <person name="Wu H."/>
            <person name="Qu D."/>
            <person name="Dong J."/>
            <person name="Sun L."/>
            <person name="Xue Y."/>
            <person name="Zhao A."/>
            <person name="Gao Y."/>
            <person name="Zhu J."/>
            <person name="Kan B."/>
            <person name="Ding K."/>
            <person name="Chen S."/>
            <person name="Cheng H."/>
            <person name="Yao Z."/>
            <person name="He B."/>
            <person name="Chen R."/>
            <person name="Ma D."/>
            <person name="Qiang B."/>
            <person name="Wen Y."/>
            <person name="Hou Y."/>
            <person name="Yu J."/>
        </authorList>
    </citation>
    <scope>NUCLEOTIDE SEQUENCE [LARGE SCALE GENOMIC DNA]</scope>
    <source>
        <strain>301 / Serotype 2a</strain>
    </source>
</reference>
<reference key="2">
    <citation type="journal article" date="2003" name="Infect. Immun.">
        <title>Complete genome sequence and comparative genomics of Shigella flexneri serotype 2a strain 2457T.</title>
        <authorList>
            <person name="Wei J."/>
            <person name="Goldberg M.B."/>
            <person name="Burland V."/>
            <person name="Venkatesan M.M."/>
            <person name="Deng W."/>
            <person name="Fournier G."/>
            <person name="Mayhew G.F."/>
            <person name="Plunkett G. III"/>
            <person name="Rose D.J."/>
            <person name="Darling A."/>
            <person name="Mau B."/>
            <person name="Perna N.T."/>
            <person name="Payne S.M."/>
            <person name="Runyen-Janecky L.J."/>
            <person name="Zhou S."/>
            <person name="Schwartz D.C."/>
            <person name="Blattner F.R."/>
        </authorList>
    </citation>
    <scope>NUCLEOTIDE SEQUENCE [LARGE SCALE GENOMIC DNA]</scope>
    <source>
        <strain>ATCC 700930 / 2457T / Serotype 2a</strain>
    </source>
</reference>
<organism>
    <name type="scientific">Shigella flexneri</name>
    <dbReference type="NCBI Taxonomy" id="623"/>
    <lineage>
        <taxon>Bacteria</taxon>
        <taxon>Pseudomonadati</taxon>
        <taxon>Pseudomonadota</taxon>
        <taxon>Gammaproteobacteria</taxon>
        <taxon>Enterobacterales</taxon>
        <taxon>Enterobacteriaceae</taxon>
        <taxon>Shigella</taxon>
    </lineage>
</organism>
<feature type="chain" id="PRO_0000277546" description="Ferrous iron permease EfeU">
    <location>
        <begin position="1"/>
        <end position="235"/>
    </location>
</feature>
<feature type="topological domain" description="Periplasmic" evidence="2">
    <location>
        <begin position="1"/>
        <end position="28"/>
    </location>
</feature>
<feature type="transmembrane region" description="Helical" evidence="2">
    <location>
        <begin position="29"/>
        <end position="49"/>
    </location>
</feature>
<feature type="topological domain" description="Cytoplasmic" evidence="2">
    <location>
        <begin position="50"/>
        <end position="77"/>
    </location>
</feature>
<feature type="transmembrane region" description="Helical" evidence="2">
    <location>
        <begin position="78"/>
        <end position="98"/>
    </location>
</feature>
<feature type="topological domain" description="Periplasmic" evidence="2">
    <location>
        <begin position="99"/>
        <end position="106"/>
    </location>
</feature>
<feature type="transmembrane region" description="Helical" evidence="2">
    <location>
        <begin position="107"/>
        <end position="127"/>
    </location>
</feature>
<feature type="topological domain" description="Cytoplasmic" evidence="2">
    <location>
        <begin position="128"/>
        <end position="138"/>
    </location>
</feature>
<feature type="transmembrane region" description="Helical" evidence="2">
    <location>
        <begin position="139"/>
        <end position="159"/>
    </location>
</feature>
<feature type="topological domain" description="Periplasmic" evidence="2">
    <location>
        <begin position="160"/>
        <end position="177"/>
    </location>
</feature>
<feature type="transmembrane region" description="Helical" evidence="2">
    <location>
        <begin position="178"/>
        <end position="198"/>
    </location>
</feature>
<feature type="topological domain" description="Cytoplasmic" evidence="2">
    <location>
        <begin position="199"/>
        <end position="203"/>
    </location>
</feature>
<feature type="transmembrane region" description="Helical" evidence="2">
    <location>
        <begin position="204"/>
        <end position="224"/>
    </location>
</feature>
<feature type="topological domain" description="Periplasmic" evidence="2">
    <location>
        <begin position="225"/>
        <end position="235"/>
    </location>
</feature>
<accession>Q83LK5</accession>
<accession>Q7UCZ5</accession>
<comment type="function">
    <text evidence="1">Uptake of Fe(2+) ions across the membrane.</text>
</comment>
<comment type="subunit">
    <text evidence="1">Part of a ferrous iron transporter composed of EfeU, EfeO and EfeB.</text>
</comment>
<comment type="subcellular location">
    <subcellularLocation>
        <location evidence="1">Cell inner membrane</location>
        <topology evidence="1">Multi-pass membrane protein</topology>
    </subcellularLocation>
</comment>
<comment type="similarity">
    <text evidence="3">Belongs to the oxidase-dependent Fe transporter (OFeT) (TC 9.A.10.1) family.</text>
</comment>
<comment type="sequence caution" evidence="3">
    <conflict type="erroneous initiation">
        <sequence resource="EMBL-CDS" id="AAN42645"/>
    </conflict>
    <text>Truncated N-terminus.</text>
</comment>
<sequence length="235" mass="25826">MTSRSRQAAYSGIFINETTGEFPQKEQELFEGIVAVIAVVILTWMVFWMRKVSRNVKVQLEQAVDSALQRGNHHGWALVMMVFFAVAREGLESVFFLLAAFQQDVGIWPPLGAMLGLATAVVLGFLLYWGGIRLNLGAFFKWTSLFILFVAAGLAAGAIRAFHEAGLWNHFQEIAFDMSAVLSTHSLFGTLMEGIFGYQEAPSVSEVAVWFIYLIPALVAFALPPRAGATASRSA</sequence>